<comment type="function">
    <text evidence="1">May act as a negative regulator of salt tolerance.</text>
</comment>
<comment type="subcellular location">
    <subcellularLocation>
        <location evidence="1">Cytoplasm</location>
    </subcellularLocation>
</comment>
<comment type="similarity">
    <text evidence="4">Belongs to the NST1 family.</text>
</comment>
<reference key="1">
    <citation type="journal article" date="2006" name="Nature">
        <title>Insights from the genome of the biotrophic fungal plant pathogen Ustilago maydis.</title>
        <authorList>
            <person name="Kaemper J."/>
            <person name="Kahmann R."/>
            <person name="Boelker M."/>
            <person name="Ma L.-J."/>
            <person name="Brefort T."/>
            <person name="Saville B.J."/>
            <person name="Banuett F."/>
            <person name="Kronstad J.W."/>
            <person name="Gold S.E."/>
            <person name="Mueller O."/>
            <person name="Perlin M.H."/>
            <person name="Woesten H.A.B."/>
            <person name="de Vries R."/>
            <person name="Ruiz-Herrera J."/>
            <person name="Reynaga-Pena C.G."/>
            <person name="Snetselaar K."/>
            <person name="McCann M."/>
            <person name="Perez-Martin J."/>
            <person name="Feldbruegge M."/>
            <person name="Basse C.W."/>
            <person name="Steinberg G."/>
            <person name="Ibeas J.I."/>
            <person name="Holloman W."/>
            <person name="Guzman P."/>
            <person name="Farman M.L."/>
            <person name="Stajich J.E."/>
            <person name="Sentandreu R."/>
            <person name="Gonzalez-Prieto J.M."/>
            <person name="Kennell J.C."/>
            <person name="Molina L."/>
            <person name="Schirawski J."/>
            <person name="Mendoza-Mendoza A."/>
            <person name="Greilinger D."/>
            <person name="Muench K."/>
            <person name="Roessel N."/>
            <person name="Scherer M."/>
            <person name="Vranes M."/>
            <person name="Ladendorf O."/>
            <person name="Vincon V."/>
            <person name="Fuchs U."/>
            <person name="Sandrock B."/>
            <person name="Meng S."/>
            <person name="Ho E.C.H."/>
            <person name="Cahill M.J."/>
            <person name="Boyce K.J."/>
            <person name="Klose J."/>
            <person name="Klosterman S.J."/>
            <person name="Deelstra H.J."/>
            <person name="Ortiz-Castellanos L."/>
            <person name="Li W."/>
            <person name="Sanchez-Alonso P."/>
            <person name="Schreier P.H."/>
            <person name="Haeuser-Hahn I."/>
            <person name="Vaupel M."/>
            <person name="Koopmann E."/>
            <person name="Friedrich G."/>
            <person name="Voss H."/>
            <person name="Schlueter T."/>
            <person name="Margolis J."/>
            <person name="Platt D."/>
            <person name="Swimmer C."/>
            <person name="Gnirke A."/>
            <person name="Chen F."/>
            <person name="Vysotskaia V."/>
            <person name="Mannhaupt G."/>
            <person name="Gueldener U."/>
            <person name="Muensterkoetter M."/>
            <person name="Haase D."/>
            <person name="Oesterheld M."/>
            <person name="Mewes H.-W."/>
            <person name="Mauceli E.W."/>
            <person name="DeCaprio D."/>
            <person name="Wade C.M."/>
            <person name="Butler J."/>
            <person name="Young S.K."/>
            <person name="Jaffe D.B."/>
            <person name="Calvo S.E."/>
            <person name="Nusbaum C."/>
            <person name="Galagan J.E."/>
            <person name="Birren B.W."/>
        </authorList>
    </citation>
    <scope>NUCLEOTIDE SEQUENCE [LARGE SCALE GENOMIC DNA]</scope>
    <source>
        <strain>DSM 14603 / FGSC 9021 / UM521</strain>
    </source>
</reference>
<reference key="2">
    <citation type="submission" date="2014-09" db="EMBL/GenBank/DDBJ databases">
        <authorList>
            <person name="Gueldener U."/>
            <person name="Muensterkoetter M."/>
            <person name="Walter M.C."/>
            <person name="Mannhaupt G."/>
            <person name="Kahmann R."/>
        </authorList>
    </citation>
    <scope>GENOME REANNOTATION</scope>
    <source>
        <strain>DSM 14603 / FGSC 9021 / UM521</strain>
    </source>
</reference>
<protein>
    <recommendedName>
        <fullName>Stress response protein NST1</fullName>
    </recommendedName>
</protein>
<proteinExistence type="inferred from homology"/>
<feature type="chain" id="PRO_0000324460" description="Stress response protein NST1">
    <location>
        <begin position="1"/>
        <end position="1703"/>
    </location>
</feature>
<feature type="region of interest" description="Disordered" evidence="3">
    <location>
        <begin position="1"/>
        <end position="91"/>
    </location>
</feature>
<feature type="region of interest" description="Disordered" evidence="3">
    <location>
        <begin position="243"/>
        <end position="288"/>
    </location>
</feature>
<feature type="region of interest" description="Disordered" evidence="3">
    <location>
        <begin position="347"/>
        <end position="484"/>
    </location>
</feature>
<feature type="region of interest" description="Disordered" evidence="3">
    <location>
        <begin position="566"/>
        <end position="724"/>
    </location>
</feature>
<feature type="region of interest" description="Disordered" evidence="3">
    <location>
        <begin position="759"/>
        <end position="807"/>
    </location>
</feature>
<feature type="region of interest" description="Disordered" evidence="3">
    <location>
        <begin position="843"/>
        <end position="1292"/>
    </location>
</feature>
<feature type="region of interest" description="Disordered" evidence="3">
    <location>
        <begin position="1353"/>
        <end position="1407"/>
    </location>
</feature>
<feature type="region of interest" description="Disordered" evidence="3">
    <location>
        <begin position="1424"/>
        <end position="1465"/>
    </location>
</feature>
<feature type="region of interest" description="Disordered" evidence="3">
    <location>
        <begin position="1516"/>
        <end position="1537"/>
    </location>
</feature>
<feature type="region of interest" description="Disordered" evidence="3">
    <location>
        <begin position="1558"/>
        <end position="1581"/>
    </location>
</feature>
<feature type="region of interest" description="Disordered" evidence="3">
    <location>
        <begin position="1595"/>
        <end position="1637"/>
    </location>
</feature>
<feature type="region of interest" description="Disordered" evidence="3">
    <location>
        <begin position="1672"/>
        <end position="1703"/>
    </location>
</feature>
<feature type="coiled-coil region" evidence="2">
    <location>
        <begin position="748"/>
        <end position="1031"/>
    </location>
</feature>
<feature type="compositionally biased region" description="Low complexity" evidence="3">
    <location>
        <begin position="7"/>
        <end position="36"/>
    </location>
</feature>
<feature type="compositionally biased region" description="Pro residues" evidence="3">
    <location>
        <begin position="37"/>
        <end position="48"/>
    </location>
</feature>
<feature type="compositionally biased region" description="Polar residues" evidence="3">
    <location>
        <begin position="57"/>
        <end position="66"/>
    </location>
</feature>
<feature type="compositionally biased region" description="Basic residues" evidence="3">
    <location>
        <begin position="77"/>
        <end position="86"/>
    </location>
</feature>
<feature type="compositionally biased region" description="Polar residues" evidence="3">
    <location>
        <begin position="253"/>
        <end position="273"/>
    </location>
</feature>
<feature type="compositionally biased region" description="Pro residues" evidence="3">
    <location>
        <begin position="274"/>
        <end position="288"/>
    </location>
</feature>
<feature type="compositionally biased region" description="Basic residues" evidence="3">
    <location>
        <begin position="365"/>
        <end position="376"/>
    </location>
</feature>
<feature type="compositionally biased region" description="Basic and acidic residues" evidence="3">
    <location>
        <begin position="384"/>
        <end position="393"/>
    </location>
</feature>
<feature type="compositionally biased region" description="Pro residues" evidence="3">
    <location>
        <begin position="396"/>
        <end position="409"/>
    </location>
</feature>
<feature type="compositionally biased region" description="Low complexity" evidence="3">
    <location>
        <begin position="410"/>
        <end position="419"/>
    </location>
</feature>
<feature type="compositionally biased region" description="Low complexity" evidence="3">
    <location>
        <begin position="453"/>
        <end position="464"/>
    </location>
</feature>
<feature type="compositionally biased region" description="Pro residues" evidence="3">
    <location>
        <begin position="572"/>
        <end position="581"/>
    </location>
</feature>
<feature type="compositionally biased region" description="Basic residues" evidence="3">
    <location>
        <begin position="614"/>
        <end position="650"/>
    </location>
</feature>
<feature type="compositionally biased region" description="Acidic residues" evidence="3">
    <location>
        <begin position="657"/>
        <end position="690"/>
    </location>
</feature>
<feature type="compositionally biased region" description="Basic and acidic residues" evidence="3">
    <location>
        <begin position="691"/>
        <end position="703"/>
    </location>
</feature>
<feature type="compositionally biased region" description="Acidic residues" evidence="3">
    <location>
        <begin position="771"/>
        <end position="802"/>
    </location>
</feature>
<feature type="compositionally biased region" description="Basic and acidic residues" evidence="3">
    <location>
        <begin position="853"/>
        <end position="866"/>
    </location>
</feature>
<feature type="compositionally biased region" description="Basic and acidic residues" evidence="3">
    <location>
        <begin position="874"/>
        <end position="896"/>
    </location>
</feature>
<feature type="compositionally biased region" description="Basic and acidic residues" evidence="3">
    <location>
        <begin position="904"/>
        <end position="1023"/>
    </location>
</feature>
<feature type="compositionally biased region" description="Low complexity" evidence="3">
    <location>
        <begin position="1024"/>
        <end position="1037"/>
    </location>
</feature>
<feature type="compositionally biased region" description="Low complexity" evidence="3">
    <location>
        <begin position="1111"/>
        <end position="1135"/>
    </location>
</feature>
<feature type="compositionally biased region" description="Pro residues" evidence="3">
    <location>
        <begin position="1138"/>
        <end position="1148"/>
    </location>
</feature>
<feature type="compositionally biased region" description="Low complexity" evidence="3">
    <location>
        <begin position="1158"/>
        <end position="1167"/>
    </location>
</feature>
<feature type="compositionally biased region" description="Polar residues" evidence="3">
    <location>
        <begin position="1200"/>
        <end position="1219"/>
    </location>
</feature>
<feature type="compositionally biased region" description="Low complexity" evidence="3">
    <location>
        <begin position="1269"/>
        <end position="1291"/>
    </location>
</feature>
<feature type="compositionally biased region" description="Low complexity" evidence="3">
    <location>
        <begin position="1431"/>
        <end position="1444"/>
    </location>
</feature>
<feature type="compositionally biased region" description="Gly residues" evidence="3">
    <location>
        <begin position="1598"/>
        <end position="1619"/>
    </location>
</feature>
<sequence>MAKSKLPRSTPAARAAAVPPPRLAAAAQQQHHQQQPPSTPPAPVPPTKPSVAGASTPPRSASPVSNHDTDSVALSSAKKKKKKSKSKAKDADFIDDQEYELQQAAALAQRPRSPASLAARAQAQAQLLAAASELYRRIEGDAQGIPDDDAYWTSLPAHLRTFIRNALPLGQFPPAAQAALNENANDPANRHASTQAMIAVAQQLAQAAHASQRHIQQYPPGTHPYPPLPFDASIFADLALHPDQPLPLHPHPNTANNAHPTNVNGAYGQYSSSPNPPPTQPPVEPLPPPVVLYDNFDDEIDRFDDDGVDDAHYYDDAELDEDDEVLEADAGLLRARNRVWMQEGANHALRPNGLATHPDGMRSASKNKKKKKKKKGGAGAAAGHGDDEAHEIELEVPPPKPVPNHPPPSTNVSSVARNSNPPPPSSRAAGKQPMTFNSTGKTPARPANGLPPSSNSGKRSVSSSTHGHPPAANASANNAKIWSTSSAEERERIKEFWLGLSMKDRQKLVQVEKETVLRKMKEQQKFLCSCAVCGRKRSAIEEELEVLYDAYYDELEEYANHQQRWVSSGGTIPPPPGPGPFPGSVALDASGAVIGGDPLSRTRAAHAGRDTRHTHTHTHAHTHTHTHTHTHTHTHAHQHPHPHPHGRKASLHPESSDGYDDDELDDDAEYDDDDDDADYDDEDEDDDVELEKERAREDYDKRNPVPSARRRGTNDSNDLFGLGSSLTVKGGILTVADDMLKNDGRKFLEMMEQLAERRMHREELTNAELAASDDEDDVDGPDDVDDEDLDEEDEDEEDEILTEEQRMEEGRKMFQIFAARMFEQRVLAAYRERVAQERQLQLLRELEEEDDNEKAREARRMKESQKKKDKKKAQREAKEAERLKKDQERAAAEAEVRAQQQAQRDAELKKQEEIRLKKEAERKAREDEKAKKDEERRRRQAEERERQLEVERKRREKEEKIRLERELQEKAKRDREEAQRKAKEEQQRVQRAKELKAKEEQERKAEAAQKEKEARAQAQREAKQAAAAASRGASAAQGVPSSPSTGPKAGSNKAANASTPGTPARGGKNGSVTGPPTVGLGQDQVQPRGVHSQRSAASSKHAPGTGGPNAAGGLAAAVAASSVAPAGSSSNAVGSTLPAPPQGLPPRPSTAVLTPAGSSSQTSSVSVAANAGLPRPPTNLAGGGSSSAVPPSLGFGSIALNAQSNVPMPSAKTPGSSISPKPAQSFVQPQEKQPSPPGFGAAQSPMGAVYGQHAGLDSLRSPTLSNGLQNSGMFGSNGSMSSSLQSPSLGAPGMGGMTNSLASLNLNAAPLSSPALNVGNPLISSKTPGLGMESSTPTGHNLGHMHSPTQTPFSPMSGSGSVDPMRSRTASFADSDPMSFAGIRPGSSLSQRVPTYRSGAPTPIGPIGRPKAMDAIQQHMHDEHTGAIGNGRSSSTTSGSGATSPRLPEGILGSSALGGDDDIIDPKPRRVSHTIPIGGGATGSSMGSAGSFFGGGMGGGSAVGGGFGVGSSSPWSSFSGNNPTAPGPLSPAFNGGGAAPGSIGSGLATGNFGLNQNASTPGAGSSGSGMAGGAASDPWARMSTNSWDRARFAFEQPGGNGVGAGSNGGTPSGLGGIGGSHHAHAPGSHMGHLHHQLGLSAGPGNGNGSGSGGMLGSFALGAPGSGTRNLFGAPGSNALHPGAIGSALSPTLPGARHVSGSHE</sequence>
<name>NST1_MYCMD</name>
<accession>Q4PBP6</accession>
<accession>A0A0D1E6F9</accession>
<gene>
    <name type="primary">NST1</name>
    <name type="ORF">UMAG_10161</name>
</gene>
<keyword id="KW-0175">Coiled coil</keyword>
<keyword id="KW-0963">Cytoplasm</keyword>
<keyword id="KW-1185">Reference proteome</keyword>
<keyword id="KW-0346">Stress response</keyword>
<organism>
    <name type="scientific">Mycosarcoma maydis</name>
    <name type="common">Corn smut fungus</name>
    <name type="synonym">Ustilago maydis</name>
    <dbReference type="NCBI Taxonomy" id="5270"/>
    <lineage>
        <taxon>Eukaryota</taxon>
        <taxon>Fungi</taxon>
        <taxon>Dikarya</taxon>
        <taxon>Basidiomycota</taxon>
        <taxon>Ustilaginomycotina</taxon>
        <taxon>Ustilaginomycetes</taxon>
        <taxon>Ustilaginales</taxon>
        <taxon>Ustilaginaceae</taxon>
        <taxon>Mycosarcoma</taxon>
    </lineage>
</organism>
<dbReference type="EMBL" id="CM003144">
    <property type="protein sequence ID" value="KIS69955.1"/>
    <property type="molecule type" value="Genomic_DNA"/>
</dbReference>
<dbReference type="RefSeq" id="XP_011388842.1">
    <property type="nucleotide sequence ID" value="XM_011390540.1"/>
</dbReference>
<dbReference type="SMR" id="Q4PBP6"/>
<dbReference type="EnsemblFungi" id="KIS69955">
    <property type="protein sequence ID" value="KIS69955"/>
    <property type="gene ID" value="UMAG_10161"/>
</dbReference>
<dbReference type="GeneID" id="23566226"/>
<dbReference type="KEGG" id="uma:UMAG_10161"/>
<dbReference type="VEuPathDB" id="FungiDB:UMAG_10161"/>
<dbReference type="eggNOG" id="ENOG502QSSK">
    <property type="taxonomic scope" value="Eukaryota"/>
</dbReference>
<dbReference type="HOGENOM" id="CLU_002935_1_0_1"/>
<dbReference type="InParanoid" id="Q4PBP6"/>
<dbReference type="OrthoDB" id="21629at2759"/>
<dbReference type="Proteomes" id="UP000000561">
    <property type="component" value="Chromosome 5"/>
</dbReference>
<dbReference type="GO" id="GO:0005737">
    <property type="term" value="C:cytoplasm"/>
    <property type="evidence" value="ECO:0007669"/>
    <property type="project" value="UniProtKB-SubCell"/>
</dbReference>
<dbReference type="CDD" id="cd22249">
    <property type="entry name" value="UDM1_RNF168_RNF169-like"/>
    <property type="match status" value="2"/>
</dbReference>
<dbReference type="InterPro" id="IPR051195">
    <property type="entry name" value="Fungal_stress_NST1"/>
</dbReference>
<dbReference type="InterPro" id="IPR025279">
    <property type="entry name" value="NST1"/>
</dbReference>
<dbReference type="PANTHER" id="PTHR31780:SF10">
    <property type="entry name" value="LD36051P"/>
    <property type="match status" value="1"/>
</dbReference>
<dbReference type="PANTHER" id="PTHR31780">
    <property type="entry name" value="STRESS RESPONSE PROTEIN NST1-RELATED"/>
    <property type="match status" value="1"/>
</dbReference>
<dbReference type="Pfam" id="PF13945">
    <property type="entry name" value="NST1"/>
    <property type="match status" value="1"/>
</dbReference>
<evidence type="ECO:0000250" key="1"/>
<evidence type="ECO:0000255" key="2"/>
<evidence type="ECO:0000256" key="3">
    <source>
        <dbReference type="SAM" id="MobiDB-lite"/>
    </source>
</evidence>
<evidence type="ECO:0000305" key="4"/>